<feature type="chain" id="PRO_1000164973" description="UPF0229 protein BAA_0633">
    <location>
        <begin position="1"/>
        <end position="391"/>
    </location>
</feature>
<feature type="region of interest" description="Disordered" evidence="2">
    <location>
        <begin position="1"/>
        <end position="31"/>
    </location>
</feature>
<feature type="region of interest" description="Disordered" evidence="2">
    <location>
        <begin position="80"/>
        <end position="117"/>
    </location>
</feature>
<feature type="compositionally biased region" description="Polar residues" evidence="2">
    <location>
        <begin position="1"/>
        <end position="16"/>
    </location>
</feature>
<feature type="compositionally biased region" description="Basic and acidic residues" evidence="2">
    <location>
        <begin position="21"/>
        <end position="31"/>
    </location>
</feature>
<feature type="compositionally biased region" description="Gly residues" evidence="2">
    <location>
        <begin position="98"/>
        <end position="115"/>
    </location>
</feature>
<dbReference type="EMBL" id="CP001598">
    <property type="protein sequence ID" value="ACQ50856.1"/>
    <property type="molecule type" value="Genomic_DNA"/>
</dbReference>
<dbReference type="SMR" id="C3NZD1"/>
<dbReference type="KEGG" id="bai:BAA_0633"/>
<dbReference type="HOGENOM" id="CLU_049702_2_0_9"/>
<dbReference type="HAMAP" id="MF_01232">
    <property type="entry name" value="UPF0229"/>
    <property type="match status" value="1"/>
</dbReference>
<dbReference type="InterPro" id="IPR014230">
    <property type="entry name" value="Spore_YhbH"/>
</dbReference>
<dbReference type="InterPro" id="IPR006698">
    <property type="entry name" value="UPF0229"/>
</dbReference>
<dbReference type="NCBIfam" id="TIGR02877">
    <property type="entry name" value="spore_yhbH"/>
    <property type="match status" value="1"/>
</dbReference>
<dbReference type="PANTHER" id="PTHR30510">
    <property type="entry name" value="UPF0229 PROTEIN YEAH"/>
    <property type="match status" value="1"/>
</dbReference>
<dbReference type="PANTHER" id="PTHR30510:SF2">
    <property type="entry name" value="UPF0229 PROTEIN YEAH"/>
    <property type="match status" value="1"/>
</dbReference>
<dbReference type="Pfam" id="PF04285">
    <property type="entry name" value="DUF444"/>
    <property type="match status" value="2"/>
</dbReference>
<name>Y633_BACAA</name>
<accession>C3NZD1</accession>
<reference key="1">
    <citation type="submission" date="2009-04" db="EMBL/GenBank/DDBJ databases">
        <title>Genome sequence of Bacillus anthracis A0248.</title>
        <authorList>
            <person name="Dodson R.J."/>
            <person name="Munk A.C."/>
            <person name="Bruce D."/>
            <person name="Detter C."/>
            <person name="Tapia R."/>
            <person name="Sutton G."/>
            <person name="Sims D."/>
            <person name="Brettin T."/>
        </authorList>
    </citation>
    <scope>NUCLEOTIDE SEQUENCE [LARGE SCALE GENOMIC DNA]</scope>
    <source>
        <strain>A0248</strain>
    </source>
</reference>
<organism>
    <name type="scientific">Bacillus anthracis (strain A0248)</name>
    <dbReference type="NCBI Taxonomy" id="592021"/>
    <lineage>
        <taxon>Bacteria</taxon>
        <taxon>Bacillati</taxon>
        <taxon>Bacillota</taxon>
        <taxon>Bacilli</taxon>
        <taxon>Bacillales</taxon>
        <taxon>Bacillaceae</taxon>
        <taxon>Bacillus</taxon>
        <taxon>Bacillus cereus group</taxon>
    </lineage>
</organism>
<protein>
    <recommendedName>
        <fullName evidence="1">UPF0229 protein BAA_0633</fullName>
    </recommendedName>
</protein>
<evidence type="ECO:0000255" key="1">
    <source>
        <dbReference type="HAMAP-Rule" id="MF_01232"/>
    </source>
</evidence>
<evidence type="ECO:0000256" key="2">
    <source>
        <dbReference type="SAM" id="MobiDB-lite"/>
    </source>
</evidence>
<proteinExistence type="inferred from homology"/>
<comment type="similarity">
    <text evidence="1">Belongs to the UPF0229 family.</text>
</comment>
<sequence length="391" mass="45314">MGEENQPNYTISQENWSLHRKGYDDQQRHQEKVQEAIKNNLPDLVTEESIVMSNGKDVVKIPIRSLDEYKIRYNYDKNKHVGQGNGDSKVGDVVARDGSGGQKQKGPGKGQGAGDAAGEDYYEAEVSILELEQAFFKELELPNLKRKEMDENRIEHVEFNDIRKTGLWGNIDKKRTMISAYKRNAMRGKASFHPIHQEDLKFRTWNEVLKPDSKAVVLAMMDTSGSMGIWEKYMARSFFFWMTRFLRTKYETVDIEFIAHHTEAKVVPEEEFFSKGESGGTICSSVYKKALELIDNKYSPDRYNIYPFHFSDGDNLTSDNARCVKLVEELMKKCNMFGYGEVNQYNRHSTLMSAYKNIKDENFRYYILKQKADVFHAMKSFFREESGEKMA</sequence>
<gene>
    <name type="ordered locus">BAA_0633</name>
</gene>